<proteinExistence type="evidence at protein level"/>
<sequence length="83" mass="9262">MKTLLLTLLVVTIVCLDLGYTLECHNQQSSQTPTTTGCSGGETNCYKKRWRDHRGYRTERGCGCPSVKNGIEINCCTTDRCNN</sequence>
<feature type="signal peptide" evidence="2 3 6 8">
    <location>
        <begin position="1"/>
        <end position="21"/>
    </location>
</feature>
<feature type="chain" id="PRO_0000035452" description="Cobrotoxin" evidence="6 8">
    <location>
        <begin position="22"/>
        <end position="83"/>
    </location>
</feature>
<feature type="site" description="May be critical for toxicity">
    <location>
        <position position="54"/>
    </location>
</feature>
<feature type="site" description="May be critical for toxicity">
    <location>
        <position position="57"/>
    </location>
</feature>
<feature type="disulfide bond" evidence="4 7 17 18">
    <location>
        <begin position="24"/>
        <end position="45"/>
    </location>
</feature>
<feature type="disulfide bond" evidence="4 7 17 18">
    <location>
        <begin position="38"/>
        <end position="62"/>
    </location>
</feature>
<feature type="disulfide bond" evidence="4 7 17 18">
    <location>
        <begin position="64"/>
        <end position="75"/>
    </location>
</feature>
<feature type="disulfide bond" evidence="4 7 17 18">
    <location>
        <begin position="76"/>
        <end position="81"/>
    </location>
</feature>
<feature type="mutagenesis site" description="Decrease in the rate of isomerization reaction of disulfide bonds." evidence="1">
    <original>E</original>
    <variation>Q</variation>
    <location>
        <position position="59"/>
    </location>
</feature>
<feature type="mutagenesis site" description="Decrease in the rate of isomerization reaction of disulfide bonds." evidence="1">
    <original>K</original>
    <variation>E</variation>
    <location>
        <position position="68"/>
    </location>
</feature>
<feature type="mutagenesis site" description="Decrease in the rate of isomerization reaction of disulfide bonds." evidence="1">
    <original>K</original>
    <variation>Q</variation>
    <location>
        <position position="68"/>
    </location>
</feature>
<feature type="sequence conflict" description="In Ref. 4; AAG43384." evidence="14" ref="4">
    <original>K</original>
    <variation>E</variation>
    <location>
        <position position="2"/>
    </location>
</feature>
<feature type="sequence conflict" description="In Ref. 3; CAB43097." evidence="14" ref="3">
    <original>D</original>
    <variation>Y</variation>
    <location>
        <position position="52"/>
    </location>
</feature>
<feature type="sequence conflict" description="In Ref. 4; AAG43384." evidence="14" ref="4">
    <original>S</original>
    <variation>I</variation>
    <location>
        <position position="66"/>
    </location>
</feature>
<feature type="sequence conflict" description="In Ref. 4; AAG43384." evidence="14" ref="4">
    <original>I</original>
    <variation>S</variation>
    <location>
        <position position="73"/>
    </location>
</feature>
<feature type="sequence conflict" description="In Ref. 3; CAB43097." evidence="14" ref="3">
    <original>DR</original>
    <variation>G</variation>
    <location>
        <begin position="79"/>
        <end position="80"/>
    </location>
</feature>
<feature type="strand" evidence="19">
    <location>
        <begin position="23"/>
        <end position="25"/>
    </location>
</feature>
<feature type="strand" evidence="19">
    <location>
        <begin position="35"/>
        <end position="37"/>
    </location>
</feature>
<feature type="strand" evidence="19">
    <location>
        <begin position="45"/>
        <end position="52"/>
    </location>
</feature>
<feature type="strand" evidence="19">
    <location>
        <begin position="55"/>
        <end position="63"/>
    </location>
</feature>
<feature type="strand" evidence="19">
    <location>
        <begin position="72"/>
        <end position="78"/>
    </location>
</feature>
<organism>
    <name type="scientific">Naja atra</name>
    <name type="common">Chinese cobra</name>
    <dbReference type="NCBI Taxonomy" id="8656"/>
    <lineage>
        <taxon>Eukaryota</taxon>
        <taxon>Metazoa</taxon>
        <taxon>Chordata</taxon>
        <taxon>Craniata</taxon>
        <taxon>Vertebrata</taxon>
        <taxon>Euteleostomi</taxon>
        <taxon>Lepidosauria</taxon>
        <taxon>Squamata</taxon>
        <taxon>Bifurcata</taxon>
        <taxon>Unidentata</taxon>
        <taxon>Episquamata</taxon>
        <taxon>Toxicofera</taxon>
        <taxon>Serpentes</taxon>
        <taxon>Colubroidea</taxon>
        <taxon>Elapidae</taxon>
        <taxon>Elapinae</taxon>
        <taxon>Naja</taxon>
    </lineage>
</organism>
<protein>
    <recommendedName>
        <fullName evidence="13">Cobrotoxin</fullName>
        <shortName>CBT</shortName>
        <shortName evidence="13">CBTX</shortName>
        <shortName evidence="12">CTX</shortName>
    </recommendedName>
    <alternativeName>
        <fullName evidence="10 11">Atratoxin</fullName>
    </alternativeName>
    <alternativeName>
        <fullName evidence="12">Cobratide</fullName>
    </alternativeName>
    <alternativeName>
        <fullName>Short neurotoxin 1</fullName>
    </alternativeName>
</protein>
<keyword id="KW-0002">3D-structure</keyword>
<keyword id="KW-0008">Acetylcholine receptor inhibiting toxin</keyword>
<keyword id="KW-0903">Direct protein sequencing</keyword>
<keyword id="KW-1015">Disulfide bond</keyword>
<keyword id="KW-0872">Ion channel impairing toxin</keyword>
<keyword id="KW-0528">Neurotoxin</keyword>
<keyword id="KW-0582">Pharmaceutical</keyword>
<keyword id="KW-0629">Postsynaptic neurotoxin</keyword>
<keyword id="KW-0964">Secreted</keyword>
<keyword id="KW-0732">Signal</keyword>
<keyword id="KW-0800">Toxin</keyword>
<comment type="function">
    <text evidence="5 9">Binds to muscle nicotinic acetylcholine receptor (nAChR) and inhibit acetylcholine from binding to the receptor, thereby impairing neuromuscular transmission. Has a higher toxicity than cobrotoxin-b (PubMed:9498573). In vivo, when tested on rat arthritis models, shows anti-inflammation and immunosuppression effects (PubMed:27840083).</text>
</comment>
<comment type="subcellular location">
    <subcellularLocation>
        <location evidence="6">Secreted</location>
    </subcellularLocation>
</comment>
<comment type="tissue specificity">
    <text evidence="14">Expressed by the venom gland.</text>
</comment>
<comment type="mass spectrometry" mass="6952.0" method="MALDI" evidence="2"/>
<comment type="toxic dose">
    <text>LD(50) is 0.09 mg/kg by subcutaneous injection.</text>
</comment>
<comment type="pharmaceutical">
    <text evidence="15 16">Analgesic available under the trade name Cobratide (approved by the National Medical Products Administration of China). Has been safely used since 1978.</text>
</comment>
<comment type="similarity">
    <text evidence="14">Belongs to the three-finger toxin family. Short-chain subfamily. Type I alpha-neurotoxin sub-subfamily.</text>
</comment>
<name>3S1CB_NAJAT</name>
<accession>P60770</accession>
<accession>O13079</accession>
<accession>P01430</accession>
<accession>Q675L7</accession>
<accession>Q9DE57</accession>
<accession>Q9W6X0</accession>
<dbReference type="EMBL" id="U58519">
    <property type="protein sequence ID" value="AAB03221.1"/>
    <property type="molecule type" value="mRNA"/>
</dbReference>
<dbReference type="EMBL" id="U58520">
    <property type="protein sequence ID" value="AAB03222.1"/>
    <property type="molecule type" value="mRNA"/>
</dbReference>
<dbReference type="EMBL" id="U58521">
    <property type="protein sequence ID" value="AAB03223.1"/>
    <property type="molecule type" value="mRNA"/>
</dbReference>
<dbReference type="EMBL" id="U77490">
    <property type="protein sequence ID" value="AAB36930.1"/>
    <property type="molecule type" value="mRNA"/>
</dbReference>
<dbReference type="EMBL" id="U77491">
    <property type="protein sequence ID" value="AAB36931.1"/>
    <property type="molecule type" value="mRNA"/>
</dbReference>
<dbReference type="EMBL" id="U77492">
    <property type="protein sequence ID" value="AAB36932.1"/>
    <property type="molecule type" value="mRNA"/>
</dbReference>
<dbReference type="EMBL" id="U42582">
    <property type="protein sequence ID" value="AAB01538.1"/>
    <property type="molecule type" value="mRNA"/>
</dbReference>
<dbReference type="EMBL" id="Y12492">
    <property type="protein sequence ID" value="CAA73097.2"/>
    <property type="molecule type" value="Genomic_DNA"/>
</dbReference>
<dbReference type="EMBL" id="AF161797">
    <property type="protein sequence ID" value="AAG43384.1"/>
    <property type="molecule type" value="Genomic_DNA"/>
</dbReference>
<dbReference type="EMBL" id="AJ239050">
    <property type="protein sequence ID" value="CAB43097.1"/>
    <property type="molecule type" value="mRNA"/>
</dbReference>
<dbReference type="EMBL" id="AY471578">
    <property type="protein sequence ID" value="AAR33035.1"/>
    <property type="molecule type" value="mRNA"/>
</dbReference>
<dbReference type="PIR" id="JC5769">
    <property type="entry name" value="N1NJ1F"/>
</dbReference>
<dbReference type="PDB" id="1COE">
    <property type="method" value="NMR"/>
    <property type="chains" value="A=22-83"/>
</dbReference>
<dbReference type="PDB" id="1V6P">
    <property type="method" value="X-ray"/>
    <property type="resolution" value="0.87 A"/>
    <property type="chains" value="A/B=22-83"/>
</dbReference>
<dbReference type="PDBsum" id="1COE"/>
<dbReference type="PDBsum" id="1V6P"/>
<dbReference type="BMRB" id="P60770"/>
<dbReference type="SMR" id="P60770"/>
<dbReference type="EvolutionaryTrace" id="P60770"/>
<dbReference type="GO" id="GO:0005576">
    <property type="term" value="C:extracellular region"/>
    <property type="evidence" value="ECO:0007669"/>
    <property type="project" value="UniProtKB-SubCell"/>
</dbReference>
<dbReference type="GO" id="GO:0030550">
    <property type="term" value="F:acetylcholine receptor inhibitor activity"/>
    <property type="evidence" value="ECO:0007669"/>
    <property type="project" value="UniProtKB-KW"/>
</dbReference>
<dbReference type="GO" id="GO:0099106">
    <property type="term" value="F:ion channel regulator activity"/>
    <property type="evidence" value="ECO:0007669"/>
    <property type="project" value="UniProtKB-KW"/>
</dbReference>
<dbReference type="GO" id="GO:0090729">
    <property type="term" value="F:toxin activity"/>
    <property type="evidence" value="ECO:0007669"/>
    <property type="project" value="UniProtKB-KW"/>
</dbReference>
<dbReference type="CDD" id="cd00206">
    <property type="entry name" value="TFP_snake_toxin"/>
    <property type="match status" value="1"/>
</dbReference>
<dbReference type="FunFam" id="2.10.60.10:FF:000024">
    <property type="entry name" value="Cytotoxin 1"/>
    <property type="match status" value="1"/>
</dbReference>
<dbReference type="Gene3D" id="2.10.60.10">
    <property type="entry name" value="CD59"/>
    <property type="match status" value="1"/>
</dbReference>
<dbReference type="InterPro" id="IPR003571">
    <property type="entry name" value="Snake_3FTx"/>
</dbReference>
<dbReference type="InterPro" id="IPR045860">
    <property type="entry name" value="Snake_toxin-like_sf"/>
</dbReference>
<dbReference type="InterPro" id="IPR018354">
    <property type="entry name" value="Snake_toxin_con_site"/>
</dbReference>
<dbReference type="InterPro" id="IPR054131">
    <property type="entry name" value="Toxin_cobra-type"/>
</dbReference>
<dbReference type="Pfam" id="PF21947">
    <property type="entry name" value="Toxin_cobra-type"/>
    <property type="match status" value="1"/>
</dbReference>
<dbReference type="SUPFAM" id="SSF57302">
    <property type="entry name" value="Snake toxin-like"/>
    <property type="match status" value="1"/>
</dbReference>
<dbReference type="PROSITE" id="PS00272">
    <property type="entry name" value="SNAKE_TOXIN"/>
    <property type="match status" value="1"/>
</dbReference>
<evidence type="ECO:0000269" key="1">
    <source>
    </source>
</evidence>
<evidence type="ECO:0000269" key="2">
    <source>
    </source>
</evidence>
<evidence type="ECO:0000269" key="3">
    <source>
    </source>
</evidence>
<evidence type="ECO:0000269" key="4">
    <source>
    </source>
</evidence>
<evidence type="ECO:0000269" key="5">
    <source>
    </source>
</evidence>
<evidence type="ECO:0000269" key="6">
    <source>
    </source>
</evidence>
<evidence type="ECO:0000269" key="7">
    <source>
    </source>
</evidence>
<evidence type="ECO:0000269" key="8">
    <source>
    </source>
</evidence>
<evidence type="ECO:0000269" key="9">
    <source>
    </source>
</evidence>
<evidence type="ECO:0000303" key="10">
    <source>
    </source>
</evidence>
<evidence type="ECO:0000303" key="11">
    <source>
    </source>
</evidence>
<evidence type="ECO:0000303" key="12">
    <source>
    </source>
</evidence>
<evidence type="ECO:0000303" key="13">
    <source>
    </source>
</evidence>
<evidence type="ECO:0000305" key="14"/>
<evidence type="ECO:0000305" key="15">
    <source>
    </source>
</evidence>
<evidence type="ECO:0000305" key="16">
    <source>
    </source>
</evidence>
<evidence type="ECO:0000312" key="17">
    <source>
        <dbReference type="PDB" id="1COE"/>
    </source>
</evidence>
<evidence type="ECO:0000312" key="18">
    <source>
        <dbReference type="PDB" id="1V6P"/>
    </source>
</evidence>
<evidence type="ECO:0007829" key="19">
    <source>
        <dbReference type="PDB" id="1V6P"/>
    </source>
</evidence>
<reference key="1">
    <citation type="submission" date="1996-05" db="EMBL/GenBank/DDBJ databases">
        <authorList>
            <person name="Chu R.C."/>
            <person name="Yang C.-C."/>
        </authorList>
    </citation>
    <scope>NUCLEOTIDE SEQUENCE [MRNA]</scope>
    <source>
        <tissue>Venom gland</tissue>
    </source>
</reference>
<reference key="2">
    <citation type="journal article" date="1997" name="Biochem. Biophys. Res. Commun.">
        <title>Genomic structures of cardiotoxin 4 and cobrotoxin from Naja naja atra (Taiwan cobra).</title>
        <authorList>
            <person name="Chang L.-S."/>
            <person name="Lin J."/>
            <person name="Chou Y.-C."/>
            <person name="Hong E."/>
        </authorList>
    </citation>
    <scope>NUCLEOTIDE SEQUENCE [GENOMIC DNA]</scope>
    <source>
        <tissue>Liver</tissue>
    </source>
</reference>
<reference key="3">
    <citation type="journal article" date="1999" name="Biochem. Biophys. Res. Commun.">
        <title>Expression and mutagenesis studies of cobrotoxin from Taiwan cobra.</title>
        <authorList>
            <person name="Chang L.-S."/>
            <person name="Chen K.-C."/>
            <person name="Wu B.-N."/>
            <person name="Lin S.-K."/>
            <person name="Wu P.-F."/>
            <person name="Hong Y.-R."/>
            <person name="Yang C.-C."/>
        </authorList>
    </citation>
    <scope>NUCLEOTIDE SEQUENCE [MRNA]</scope>
    <scope>MUTAGENESIS OF GLU-59 AND LYS-68</scope>
    <source>
        <tissue>Venom gland</tissue>
    </source>
</reference>
<reference key="4">
    <citation type="submission" date="1999-06" db="EMBL/GenBank/DDBJ databases">
        <authorList>
            <person name="Qin C."/>
            <person name="Zhiyong H."/>
            <person name="Yi G."/>
            <person name="Shengli Y."/>
        </authorList>
    </citation>
    <scope>NUCLEOTIDE SEQUENCE [GENOMIC DNA]</scope>
    <source>
        <tissue>Venom gland</tissue>
    </source>
</reference>
<reference key="5">
    <citation type="journal article" date="2004" name="J. Biol. Chem.">
        <title>The atomic resolution crystal structure of atratoxin determined by single wavelength anomalous diffraction phasing.</title>
        <authorList>
            <person name="Lou X."/>
            <person name="Liu Q."/>
            <person name="Tu X."/>
            <person name="Wang J."/>
            <person name="Teng M."/>
            <person name="Niu L."/>
            <person name="Schuller D.J."/>
            <person name="Huang Q."/>
            <person name="Hao Q."/>
        </authorList>
    </citation>
    <scope>NUCLEOTIDE SEQUENCE [MRNA]</scope>
    <scope>PROTEIN SEQUENCE OF 22-49 AND 69-83</scope>
    <scope>SEQUENCE REVISION</scope>
    <source>
        <tissue>Venom</tissue>
        <tissue>Venom gland</tissue>
    </source>
</reference>
<reference key="6">
    <citation type="journal article" date="1969" name="Biochim. Biophys. Acta">
        <title>The amino acid sequence of cobrotoxin.</title>
        <authorList>
            <person name="Yang C.-C."/>
            <person name="Yang H.J."/>
            <person name="Huang J.S."/>
        </authorList>
    </citation>
    <scope>PROTEIN SEQUENCE OF 22-83</scope>
    <scope>SUBCELLULAR LOCATION</scope>
    <source>
        <tissue>Venom</tissue>
    </source>
</reference>
<reference key="7">
    <citation type="journal article" date="1993" name="Biochemistry">
        <title>Cobra venom cardiotoxin (cytotoxin) isoforms and neurotoxin: comparative potency of protein kinase C inhibition and cancer cell cytotoxicity and modes of enzyme inhibition.</title>
        <authorList>
            <person name="Chiou S.-H."/>
            <person name="Raynor R.L."/>
            <person name="Zheng B."/>
            <person name="Chambers T.C."/>
            <person name="Kuo J.F."/>
        </authorList>
    </citation>
    <scope>PROTEIN SEQUENCE OF 22-83</scope>
    <source>
        <tissue>Venom</tissue>
    </source>
</reference>
<reference key="8">
    <citation type="journal article" date="2002" name="Acta Crystallogr. D">
        <title>Purification, N-terminal sequencing, crystallization and preliminary X-ray diffraction analysis of atratoxin, a new short-chain alpha-neurotoxin from the venom of Naja naja atra.</title>
        <authorList>
            <person name="Tu X."/>
            <person name="Huang Q."/>
            <person name="Lou X."/>
            <person name="Teng M."/>
            <person name="Niu L."/>
        </authorList>
    </citation>
    <scope>PROTEIN SEQUENCE OF 22-36</scope>
    <scope>MASS SPECTROMETRY</scope>
</reference>
<reference key="9">
    <citation type="journal article" date="1997" name="J. Biochem.">
        <title>A novel neurotoxin, cobrotoxin b, from Naja naja atra (Taiwan cobra) venom: purification, characterization, and gene organization.</title>
        <authorList>
            <person name="Chang L.-S."/>
            <person name="Chou Y.-C."/>
            <person name="Lin S.-R."/>
            <person name="Wu B.-N."/>
            <person name="Lin J."/>
            <person name="Hong E."/>
            <person name="Sun Y.-J."/>
            <person name="Hsiao C.-D."/>
        </authorList>
    </citation>
    <scope>FUNCTION</scope>
</reference>
<reference key="10">
    <citation type="journal article" date="1970" name="Biochim. Biophys. Acta">
        <title>The position of disulfide bonds in cobrotoxin.</title>
        <authorList>
            <person name="Yang C.-C."/>
            <person name="Yang H.J."/>
            <person name="Chiu R.H.C."/>
        </authorList>
    </citation>
    <scope>DISULFIDE BONDS</scope>
</reference>
<reference key="11">
    <citation type="journal article" date="2016" name="J. Ethnopharmacol.">
        <title>Cobrotoxin extracted from Naja atra venom relieves arthritis symptoms through anti-inflammation and immunosuppression effects in rat arthritis model.</title>
        <authorList>
            <person name="Zhu Q."/>
            <person name="Huang J."/>
            <person name="Wang S.Z."/>
            <person name="Qin Z.H."/>
            <person name="Lin F."/>
        </authorList>
    </citation>
    <scope>FUNCTION</scope>
    <source>
        <tissue>Venom</tissue>
    </source>
</reference>
<reference key="12">
    <citation type="journal article" date="2020" name="Acta Pharmacol. Sin.">
        <title>Cobrotoxin could be an effective therapeutic for COVID-19.</title>
        <authorList>
            <person name="Lin F."/>
            <person name="Reid P.F."/>
            <person name="Qin Z.H."/>
        </authorList>
    </citation>
    <scope>PHARMACEUTICAL</scope>
</reference>
<reference key="13">
    <citation type="journal article" date="1990" name="Eur. J. Biochem.">
        <title>Two-dimensional NMR studies and secondary structure of cobrotoxin in aqueous solution.</title>
        <authorList>
            <person name="Yu C."/>
            <person name="Lee C.-S."/>
            <person name="Chuang L.-C."/>
            <person name="Shei Y.-R."/>
            <person name="Wang C.Y."/>
        </authorList>
    </citation>
    <scope>STRUCTURE BY NMR</scope>
    <scope>DISULFIDE BONDS</scope>
</reference>
<reference key="14">
    <citation type="journal article" date="1993" name="Biochemistry">
        <title>Solution conformation of cobrotoxin: a nuclear magnetic resonance and hybrid distance geometry-dynamical simulated annealing study.</title>
        <authorList>
            <person name="Yu C."/>
            <person name="Bhaskaran R."/>
            <person name="Chuang L.-C."/>
            <person name="Yang C.-C."/>
        </authorList>
    </citation>
    <scope>STRUCTURE BY NMR</scope>
    <scope>DISULFIDE BONDS</scope>
</reference>